<feature type="chain" id="PRO_0000423857" description="Na(+)/H(+) antiporter NhaG">
    <location>
        <begin position="1"/>
        <end position="524"/>
    </location>
</feature>
<feature type="transmembrane region" description="Helical" evidence="1">
    <location>
        <begin position="6"/>
        <end position="26"/>
    </location>
</feature>
<feature type="transmembrane region" description="Helical" evidence="1">
    <location>
        <begin position="33"/>
        <end position="53"/>
    </location>
</feature>
<feature type="transmembrane region" description="Helical" evidence="1">
    <location>
        <begin position="59"/>
        <end position="79"/>
    </location>
</feature>
<feature type="transmembrane region" description="Helical" evidence="1">
    <location>
        <begin position="98"/>
        <end position="118"/>
    </location>
</feature>
<feature type="transmembrane region" description="Helical" evidence="1">
    <location>
        <begin position="126"/>
        <end position="146"/>
    </location>
</feature>
<feature type="transmembrane region" description="Helical" evidence="1">
    <location>
        <begin position="169"/>
        <end position="189"/>
    </location>
</feature>
<feature type="transmembrane region" description="Helical" evidence="1">
    <location>
        <begin position="193"/>
        <end position="213"/>
    </location>
</feature>
<feature type="transmembrane region" description="Helical" evidence="1">
    <location>
        <begin position="242"/>
        <end position="262"/>
    </location>
</feature>
<feature type="transmembrane region" description="Helical" evidence="1">
    <location>
        <begin position="283"/>
        <end position="303"/>
    </location>
</feature>
<feature type="transmembrane region" description="Helical" evidence="1">
    <location>
        <begin position="312"/>
        <end position="332"/>
    </location>
</feature>
<feature type="transmembrane region" description="Helical" evidence="1">
    <location>
        <begin position="374"/>
        <end position="394"/>
    </location>
</feature>
<reference key="1">
    <citation type="journal article" date="2001" name="J. Biochem.">
        <title>nhaG Na(+)/H(+) antiporter gene of Bacillus subtilis ATCC9372, which is missing in the complete genome sequence of strain 168, and properties of the antiporter.</title>
        <authorList>
            <person name="Gouda T."/>
            <person name="Kuroda M."/>
            <person name="Hiramatsu T."/>
            <person name="Nozaki K."/>
            <person name="Kuroda T."/>
            <person name="Mizushima T."/>
            <person name="Tsuchiya T."/>
        </authorList>
    </citation>
    <scope>NUCLEOTIDE SEQUENCE [GENOMIC DNA]</scope>
    <scope>FUNCTION</scope>
    <scope>BIOPHYSICOCHEMICAL PROPERTIES</scope>
    <scope>SUBCELLULAR LOCATION</scope>
    <source>
        <strain>ATCC 9372 / DSM 675 / NBRC 13721 / NCIMB 8058 / NRS 1221A</strain>
    </source>
</reference>
<keyword id="KW-0050">Antiport</keyword>
<keyword id="KW-1003">Cell membrane</keyword>
<keyword id="KW-0406">Ion transport</keyword>
<keyword id="KW-0472">Membrane</keyword>
<keyword id="KW-0915">Sodium</keyword>
<keyword id="KW-0739">Sodium transport</keyword>
<keyword id="KW-0812">Transmembrane</keyword>
<keyword id="KW-1133">Transmembrane helix</keyword>
<keyword id="KW-0813">Transport</keyword>
<accession>Q9LCB5</accession>
<sequence>MEHLDLHHIFELGFFVVMIAAGITAIAKKCRQPYPIALVIVGTIIGLVHIPLFEPLKEFITEGEVFNFVIITLFLPALLGEAALKLPFSHLRENKRPVLALFGGTLISFLIVGFSSMWLMHLAIPAAFVFAALMSATDPVSVLSIFKSVGAPKKLSIVVEGESLFNDGLAVVLFNISAFYLMTYLDLGIQGAGLGLWEFVKVISLGLIIGGVLGYVFSQLTKYFDDYPLEIIFSIILFYSSFLLAEMAGASGVIAVVVAALIFGNYGAKIGMSPTTKLNINNFWDVAALLANSLVFLMVGLEITRIDLTDKWGLAIMAIVIVLIARSAAVYISLAFIKKFPVTWKHTINWGGLKGSLSIALVLSLPRDFPGREDILVFAFSVVLFSLVVQGLTIKPLLERLGVNQKEEGNQEYEELLAKGHRLETAIKEVQQVKHNLLIHEAVSSELTDQYKKEVSQLHQQTNKLFETYPELKNKQQTILKKHSLYAQYQAIENLSREDIISNEVAELEQARIIDEIVRLQNDH</sequence>
<name>NHAG_BACAT</name>
<gene>
    <name type="primary">nhaG</name>
</gene>
<proteinExistence type="evidence at protein level"/>
<organism>
    <name type="scientific">Bacillus atrophaeus</name>
    <dbReference type="NCBI Taxonomy" id="1452"/>
    <lineage>
        <taxon>Bacteria</taxon>
        <taxon>Bacillati</taxon>
        <taxon>Bacillota</taxon>
        <taxon>Bacilli</taxon>
        <taxon>Bacillales</taxon>
        <taxon>Bacillaceae</taxon>
        <taxon>Bacillus</taxon>
    </lineage>
</organism>
<protein>
    <recommendedName>
        <fullName>Na(+)/H(+) antiporter NhaG</fullName>
    </recommendedName>
    <alternativeName>
        <fullName>Sodium/proton antiporter NhaG</fullName>
    </alternativeName>
</protein>
<evidence type="ECO:0000255" key="1"/>
<evidence type="ECO:0000269" key="2">
    <source>
    </source>
</evidence>
<evidence type="ECO:0000305" key="3"/>
<comment type="function">
    <text evidence="2">Na(+)/H(+) antiporter that extrudes sodium in exchange for external protons. Can also transport lithium.</text>
</comment>
<comment type="biophysicochemical properties">
    <phDependence>
        <text evidence="2">Optimum pH is 8.0-9.0 for sodium transport and 8.0 for lithium transport.</text>
    </phDependence>
</comment>
<comment type="subcellular location">
    <subcellularLocation>
        <location evidence="2">Cell membrane</location>
        <topology evidence="2">Multi-pass membrane protein</topology>
    </subcellularLocation>
</comment>
<comment type="similarity">
    <text evidence="3">Belongs to the monovalent cation:proton antiporter 1 (CPA1) transporter (TC 2.A.36) family.</text>
</comment>
<dbReference type="EMBL" id="AB029555">
    <property type="protein sequence ID" value="BAA89487.1"/>
    <property type="molecule type" value="Genomic_DNA"/>
</dbReference>
<dbReference type="SMR" id="Q9LCB5"/>
<dbReference type="TCDB" id="2.A.36.6.2">
    <property type="family name" value="the monovalent cation:proton antiporter-1 (cpa1) family"/>
</dbReference>
<dbReference type="GO" id="GO:0005886">
    <property type="term" value="C:plasma membrane"/>
    <property type="evidence" value="ECO:0007669"/>
    <property type="project" value="UniProtKB-SubCell"/>
</dbReference>
<dbReference type="GO" id="GO:0015386">
    <property type="term" value="F:potassium:proton antiporter activity"/>
    <property type="evidence" value="ECO:0007669"/>
    <property type="project" value="TreeGrafter"/>
</dbReference>
<dbReference type="GO" id="GO:0015385">
    <property type="term" value="F:sodium:proton antiporter activity"/>
    <property type="evidence" value="ECO:0007669"/>
    <property type="project" value="InterPro"/>
</dbReference>
<dbReference type="GO" id="GO:0051453">
    <property type="term" value="P:regulation of intracellular pH"/>
    <property type="evidence" value="ECO:0007669"/>
    <property type="project" value="TreeGrafter"/>
</dbReference>
<dbReference type="GO" id="GO:0098719">
    <property type="term" value="P:sodium ion import across plasma membrane"/>
    <property type="evidence" value="ECO:0007669"/>
    <property type="project" value="TreeGrafter"/>
</dbReference>
<dbReference type="Gene3D" id="6.10.140.1330">
    <property type="match status" value="1"/>
</dbReference>
<dbReference type="InterPro" id="IPR018422">
    <property type="entry name" value="Cation/H_exchanger_CPA1"/>
</dbReference>
<dbReference type="InterPro" id="IPR006153">
    <property type="entry name" value="Cation/H_exchanger_TM"/>
</dbReference>
<dbReference type="PANTHER" id="PTHR10110:SF195">
    <property type="entry name" value="NA(+)_H(+) ANTIPORTER NHAS2"/>
    <property type="match status" value="1"/>
</dbReference>
<dbReference type="PANTHER" id="PTHR10110">
    <property type="entry name" value="SODIUM/HYDROGEN EXCHANGER"/>
    <property type="match status" value="1"/>
</dbReference>
<dbReference type="Pfam" id="PF00999">
    <property type="entry name" value="Na_H_Exchanger"/>
    <property type="match status" value="1"/>
</dbReference>